<comment type="function">
    <text evidence="2">Purine nucleoside enzyme that catalyzes the phosphorolysis of adenosine and inosine nucleosides, yielding D-ribose 1-phosphate and the respective free bases, adenine and hypoxanthine. Also catalyzes the phosphorolysis of S-methyl-5'-thioadenosine into adenine and S-methyl-5-thio-alpha-D-ribose 1-phosphate. Also has adenosine deaminase activity.</text>
</comment>
<comment type="catalytic activity">
    <reaction evidence="2">
        <text>adenosine + phosphate = alpha-D-ribose 1-phosphate + adenine</text>
        <dbReference type="Rhea" id="RHEA:27642"/>
        <dbReference type="ChEBI" id="CHEBI:16335"/>
        <dbReference type="ChEBI" id="CHEBI:16708"/>
        <dbReference type="ChEBI" id="CHEBI:43474"/>
        <dbReference type="ChEBI" id="CHEBI:57720"/>
        <dbReference type="EC" id="2.4.2.1"/>
    </reaction>
    <physiologicalReaction direction="left-to-right" evidence="2">
        <dbReference type="Rhea" id="RHEA:27643"/>
    </physiologicalReaction>
</comment>
<comment type="catalytic activity">
    <reaction evidence="2">
        <text>S-methyl-5'-thioadenosine + phosphate = 5-(methylsulfanyl)-alpha-D-ribose 1-phosphate + adenine</text>
        <dbReference type="Rhea" id="RHEA:11852"/>
        <dbReference type="ChEBI" id="CHEBI:16708"/>
        <dbReference type="ChEBI" id="CHEBI:17509"/>
        <dbReference type="ChEBI" id="CHEBI:43474"/>
        <dbReference type="ChEBI" id="CHEBI:58533"/>
        <dbReference type="EC" id="2.4.2.28"/>
    </reaction>
    <physiologicalReaction direction="left-to-right" evidence="2">
        <dbReference type="Rhea" id="RHEA:11853"/>
    </physiologicalReaction>
</comment>
<comment type="catalytic activity">
    <reaction evidence="2">
        <text>inosine + phosphate = alpha-D-ribose 1-phosphate + hypoxanthine</text>
        <dbReference type="Rhea" id="RHEA:27646"/>
        <dbReference type="ChEBI" id="CHEBI:17368"/>
        <dbReference type="ChEBI" id="CHEBI:17596"/>
        <dbReference type="ChEBI" id="CHEBI:43474"/>
        <dbReference type="ChEBI" id="CHEBI:57720"/>
        <dbReference type="EC" id="2.4.2.1"/>
    </reaction>
    <physiologicalReaction direction="left-to-right" evidence="2">
        <dbReference type="Rhea" id="RHEA:27647"/>
    </physiologicalReaction>
</comment>
<comment type="catalytic activity">
    <reaction evidence="2">
        <text>adenosine + H2O + H(+) = inosine + NH4(+)</text>
        <dbReference type="Rhea" id="RHEA:24408"/>
        <dbReference type="ChEBI" id="CHEBI:15377"/>
        <dbReference type="ChEBI" id="CHEBI:15378"/>
        <dbReference type="ChEBI" id="CHEBI:16335"/>
        <dbReference type="ChEBI" id="CHEBI:17596"/>
        <dbReference type="ChEBI" id="CHEBI:28938"/>
        <dbReference type="EC" id="3.5.4.4"/>
    </reaction>
    <physiologicalReaction direction="left-to-right" evidence="2">
        <dbReference type="Rhea" id="RHEA:24409"/>
    </physiologicalReaction>
</comment>
<comment type="cofactor">
    <cofactor evidence="1">
        <name>Cu(2+)</name>
        <dbReference type="ChEBI" id="CHEBI:29036"/>
    </cofactor>
    <cofactor evidence="2">
        <name>Zn(2+)</name>
        <dbReference type="ChEBI" id="CHEBI:29105"/>
    </cofactor>
</comment>
<comment type="subunit">
    <text evidence="3">Homodimer.</text>
</comment>
<comment type="similarity">
    <text evidence="4">Belongs to the purine nucleoside phosphorylase YfiH/LACC1 family.</text>
</comment>
<accession>P74606</accession>
<dbReference type="EC" id="2.4.2.1" evidence="2"/>
<dbReference type="EC" id="3.5.4.4" evidence="2"/>
<dbReference type="EC" id="2.4.2.28" evidence="2"/>
<dbReference type="EMBL" id="BA000022">
    <property type="protein sequence ID" value="BAA18714.1"/>
    <property type="molecule type" value="Genomic_DNA"/>
</dbReference>
<dbReference type="PIR" id="S76802">
    <property type="entry name" value="S76802"/>
</dbReference>
<dbReference type="SMR" id="P74606"/>
<dbReference type="FunCoup" id="P74606">
    <property type="interactions" value="184"/>
</dbReference>
<dbReference type="IntAct" id="P74606">
    <property type="interactions" value="3"/>
</dbReference>
<dbReference type="STRING" id="1148.gene:10500486"/>
<dbReference type="PaxDb" id="1148-1653803"/>
<dbReference type="EnsemblBacteria" id="BAA18714">
    <property type="protein sequence ID" value="BAA18714"/>
    <property type="gene ID" value="BAA18714"/>
</dbReference>
<dbReference type="KEGG" id="syn:slr1573"/>
<dbReference type="eggNOG" id="COG1496">
    <property type="taxonomic scope" value="Bacteria"/>
</dbReference>
<dbReference type="InParanoid" id="P74606"/>
<dbReference type="PhylomeDB" id="P74606"/>
<dbReference type="Proteomes" id="UP000001425">
    <property type="component" value="Chromosome"/>
</dbReference>
<dbReference type="GO" id="GO:0004000">
    <property type="term" value="F:adenosine deaminase activity"/>
    <property type="evidence" value="ECO:0007669"/>
    <property type="project" value="RHEA"/>
</dbReference>
<dbReference type="GO" id="GO:0005507">
    <property type="term" value="F:copper ion binding"/>
    <property type="evidence" value="ECO:0000318"/>
    <property type="project" value="GO_Central"/>
</dbReference>
<dbReference type="GO" id="GO:0016491">
    <property type="term" value="F:oxidoreductase activity"/>
    <property type="evidence" value="ECO:0007669"/>
    <property type="project" value="UniProtKB-KW"/>
</dbReference>
<dbReference type="GO" id="GO:0017061">
    <property type="term" value="F:S-methyl-5-thioadenosine phosphorylase activity"/>
    <property type="evidence" value="ECO:0007669"/>
    <property type="project" value="UniProtKB-EC"/>
</dbReference>
<dbReference type="CDD" id="cd16833">
    <property type="entry name" value="YfiH"/>
    <property type="match status" value="1"/>
</dbReference>
<dbReference type="FunFam" id="3.60.140.10:FF:000012">
    <property type="entry name" value="Polyphenol oxidase"/>
    <property type="match status" value="1"/>
</dbReference>
<dbReference type="Gene3D" id="3.60.140.10">
    <property type="entry name" value="CNF1/YfiH-like putative cysteine hydrolases"/>
    <property type="match status" value="1"/>
</dbReference>
<dbReference type="InterPro" id="IPR003730">
    <property type="entry name" value="Cu_polyphenol_OxRdtase"/>
</dbReference>
<dbReference type="InterPro" id="IPR038371">
    <property type="entry name" value="Cu_polyphenol_OxRdtase_sf"/>
</dbReference>
<dbReference type="InterPro" id="IPR011324">
    <property type="entry name" value="Cytotoxic_necrot_fac-like_cat"/>
</dbReference>
<dbReference type="NCBIfam" id="TIGR00726">
    <property type="entry name" value="peptidoglycan editing factor PgeF"/>
    <property type="match status" value="1"/>
</dbReference>
<dbReference type="PANTHER" id="PTHR30616:SF2">
    <property type="entry name" value="PURINE NUCLEOSIDE PHOSPHORYLASE LACC1"/>
    <property type="match status" value="1"/>
</dbReference>
<dbReference type="PANTHER" id="PTHR30616">
    <property type="entry name" value="UNCHARACTERIZED PROTEIN YFIH"/>
    <property type="match status" value="1"/>
</dbReference>
<dbReference type="Pfam" id="PF02578">
    <property type="entry name" value="Cu-oxidase_4"/>
    <property type="match status" value="1"/>
</dbReference>
<dbReference type="SUPFAM" id="SSF64438">
    <property type="entry name" value="CNF1/YfiH-like putative cysteine hydrolases"/>
    <property type="match status" value="1"/>
</dbReference>
<organism>
    <name type="scientific">Synechocystis sp. (strain ATCC 27184 / PCC 6803 / Kazusa)</name>
    <dbReference type="NCBI Taxonomy" id="1111708"/>
    <lineage>
        <taxon>Bacteria</taxon>
        <taxon>Bacillati</taxon>
        <taxon>Cyanobacteriota</taxon>
        <taxon>Cyanophyceae</taxon>
        <taxon>Synechococcales</taxon>
        <taxon>Merismopediaceae</taxon>
        <taxon>Synechocystis</taxon>
    </lineage>
</organism>
<reference key="1">
    <citation type="journal article" date="1996" name="DNA Res.">
        <title>Sequence analysis of the genome of the unicellular cyanobacterium Synechocystis sp. strain PCC6803. II. Sequence determination of the entire genome and assignment of potential protein-coding regions.</title>
        <authorList>
            <person name="Kaneko T."/>
            <person name="Sato S."/>
            <person name="Kotani H."/>
            <person name="Tanaka A."/>
            <person name="Asamizu E."/>
            <person name="Nakamura Y."/>
            <person name="Miyajima N."/>
            <person name="Hirosawa M."/>
            <person name="Sugiura M."/>
            <person name="Sasamoto S."/>
            <person name="Kimura T."/>
            <person name="Hosouchi T."/>
            <person name="Matsuno A."/>
            <person name="Muraki A."/>
            <person name="Nakazaki N."/>
            <person name="Naruo K."/>
            <person name="Okumura S."/>
            <person name="Shimpo S."/>
            <person name="Takeuchi C."/>
            <person name="Wada T."/>
            <person name="Watanabe A."/>
            <person name="Yamada M."/>
            <person name="Yasuda M."/>
            <person name="Tabata S."/>
        </authorList>
    </citation>
    <scope>NUCLEOTIDE SEQUENCE [LARGE SCALE GENOMIC DNA]</scope>
    <source>
        <strain>ATCC 27184 / PCC 6803 / Kazusa</strain>
    </source>
</reference>
<sequence length="264" mass="29346">MTMGDDLWGWQNINGSPYLTCALLAPWPHAFFTRAFYPQLPEQLITYLDPQGKAFRVKQVHGDVTLTATEIGQTPLAPDSTHPPADGIISDAPHQGVWVASADCTPVLIGDLIGKRVAAIHAGWRGTKARIVPKTIDKFLALGSELKDLRVALGPAIAGEVYQVDPWVALEVGQSVQAVQKLATEEQQWDHLSTMVNPPVLPDAEPEKYRLDVRRINQLQLLELGFAQEQIAVAPHCTFQMEELFFSYRRTHTKEVQWSGIVSY</sequence>
<feature type="chain" id="PRO_0000163184" description="Purine nucleoside phosphorylase slr1573">
    <location>
        <begin position="1"/>
        <end position="264"/>
    </location>
</feature>
<feature type="binding site" evidence="2">
    <location>
        <position position="61"/>
    </location>
    <ligand>
        <name>Zn(2+)</name>
        <dbReference type="ChEBI" id="CHEBI:29105"/>
        <note>catalytic</note>
    </ligand>
</feature>
<feature type="binding site" evidence="2">
    <location>
        <position position="104"/>
    </location>
    <ligand>
        <name>Zn(2+)</name>
        <dbReference type="ChEBI" id="CHEBI:29105"/>
        <note>catalytic</note>
    </ligand>
</feature>
<feature type="binding site" evidence="2">
    <location>
        <position position="121"/>
    </location>
    <ligand>
        <name>Zn(2+)</name>
        <dbReference type="ChEBI" id="CHEBI:29105"/>
        <note>catalytic</note>
    </ligand>
</feature>
<evidence type="ECO:0000250" key="1">
    <source>
        <dbReference type="UniProtKB" id="P33644"/>
    </source>
</evidence>
<evidence type="ECO:0000250" key="2">
    <source>
        <dbReference type="UniProtKB" id="P84138"/>
    </source>
</evidence>
<evidence type="ECO:0000250" key="3">
    <source>
        <dbReference type="UniProtKB" id="Q1EIR0"/>
    </source>
</evidence>
<evidence type="ECO:0000305" key="4"/>
<name>PURNU_SYNY3</name>
<gene>
    <name type="ordered locus">slr1573</name>
</gene>
<protein>
    <recommendedName>
        <fullName>Purine nucleoside phosphorylase slr1573</fullName>
        <ecNumber evidence="2">2.4.2.1</ecNumber>
    </recommendedName>
    <alternativeName>
        <fullName>Adenosine deaminase slr1573</fullName>
        <ecNumber evidence="2">3.5.4.4</ecNumber>
    </alternativeName>
    <alternativeName>
        <fullName>S-methyl-5'-thioadenosine phosphorylase slr1573</fullName>
        <ecNumber evidence="2">2.4.2.28</ecNumber>
    </alternativeName>
</protein>
<keyword id="KW-0186">Copper</keyword>
<keyword id="KW-0378">Hydrolase</keyword>
<keyword id="KW-0479">Metal-binding</keyword>
<keyword id="KW-0560">Oxidoreductase</keyword>
<keyword id="KW-1185">Reference proteome</keyword>
<keyword id="KW-0808">Transferase</keyword>
<keyword id="KW-0862">Zinc</keyword>
<proteinExistence type="inferred from homology"/>